<reference key="1">
    <citation type="journal article" date="2009" name="Science">
        <title>The dynamics and time scale of ongoing genomic erosion in symbiotic bacteria.</title>
        <authorList>
            <person name="Moran N.A."/>
            <person name="McLaughlin H.J."/>
            <person name="Sorek R."/>
        </authorList>
    </citation>
    <scope>NUCLEOTIDE SEQUENCE [LARGE SCALE GENOMIC DNA]</scope>
    <source>
        <strain>5A</strain>
    </source>
</reference>
<proteinExistence type="inferred from homology"/>
<evidence type="ECO:0000255" key="1">
    <source>
        <dbReference type="HAMAP-Rule" id="MF_00001"/>
    </source>
</evidence>
<keyword id="KW-0665">Pyrimidine biosynthesis</keyword>
<keyword id="KW-0808">Transferase</keyword>
<dbReference type="EC" id="2.1.3.2" evidence="1"/>
<dbReference type="EMBL" id="CP001161">
    <property type="protein sequence ID" value="ACL30725.1"/>
    <property type="molecule type" value="Genomic_DNA"/>
</dbReference>
<dbReference type="RefSeq" id="WP_009874327.1">
    <property type="nucleotide sequence ID" value="NC_011833.1"/>
</dbReference>
<dbReference type="SMR" id="B8D9F4"/>
<dbReference type="KEGG" id="bap:BUAP5A_362"/>
<dbReference type="HOGENOM" id="CLU_043846_1_2_6"/>
<dbReference type="OrthoDB" id="9774690at2"/>
<dbReference type="UniPathway" id="UPA00070">
    <property type="reaction ID" value="UER00116"/>
</dbReference>
<dbReference type="Proteomes" id="UP000006904">
    <property type="component" value="Chromosome"/>
</dbReference>
<dbReference type="GO" id="GO:0005829">
    <property type="term" value="C:cytosol"/>
    <property type="evidence" value="ECO:0007669"/>
    <property type="project" value="TreeGrafter"/>
</dbReference>
<dbReference type="GO" id="GO:0016597">
    <property type="term" value="F:amino acid binding"/>
    <property type="evidence" value="ECO:0007669"/>
    <property type="project" value="InterPro"/>
</dbReference>
<dbReference type="GO" id="GO:0004070">
    <property type="term" value="F:aspartate carbamoyltransferase activity"/>
    <property type="evidence" value="ECO:0007669"/>
    <property type="project" value="UniProtKB-UniRule"/>
</dbReference>
<dbReference type="GO" id="GO:0006207">
    <property type="term" value="P:'de novo' pyrimidine nucleobase biosynthetic process"/>
    <property type="evidence" value="ECO:0007669"/>
    <property type="project" value="InterPro"/>
</dbReference>
<dbReference type="GO" id="GO:0044205">
    <property type="term" value="P:'de novo' UMP biosynthetic process"/>
    <property type="evidence" value="ECO:0007669"/>
    <property type="project" value="UniProtKB-UniRule"/>
</dbReference>
<dbReference type="GO" id="GO:0006520">
    <property type="term" value="P:amino acid metabolic process"/>
    <property type="evidence" value="ECO:0007669"/>
    <property type="project" value="InterPro"/>
</dbReference>
<dbReference type="FunFam" id="3.40.50.1370:FF:000001">
    <property type="entry name" value="Aspartate carbamoyltransferase"/>
    <property type="match status" value="1"/>
</dbReference>
<dbReference type="FunFam" id="3.40.50.1370:FF:000002">
    <property type="entry name" value="Aspartate carbamoyltransferase 2"/>
    <property type="match status" value="1"/>
</dbReference>
<dbReference type="Gene3D" id="3.40.50.1370">
    <property type="entry name" value="Aspartate/ornithine carbamoyltransferase"/>
    <property type="match status" value="2"/>
</dbReference>
<dbReference type="HAMAP" id="MF_00001">
    <property type="entry name" value="Asp_carb_tr"/>
    <property type="match status" value="1"/>
</dbReference>
<dbReference type="InterPro" id="IPR006132">
    <property type="entry name" value="Asp/Orn_carbamoyltranf_P-bd"/>
</dbReference>
<dbReference type="InterPro" id="IPR006130">
    <property type="entry name" value="Asp/Orn_carbamoylTrfase"/>
</dbReference>
<dbReference type="InterPro" id="IPR036901">
    <property type="entry name" value="Asp/Orn_carbamoylTrfase_sf"/>
</dbReference>
<dbReference type="InterPro" id="IPR002082">
    <property type="entry name" value="Asp_carbamoyltransf"/>
</dbReference>
<dbReference type="InterPro" id="IPR006131">
    <property type="entry name" value="Asp_carbamoyltransf_Asp/Orn-bd"/>
</dbReference>
<dbReference type="NCBIfam" id="TIGR00670">
    <property type="entry name" value="asp_carb_tr"/>
    <property type="match status" value="1"/>
</dbReference>
<dbReference type="NCBIfam" id="NF002032">
    <property type="entry name" value="PRK00856.1"/>
    <property type="match status" value="1"/>
</dbReference>
<dbReference type="PANTHER" id="PTHR45753:SF6">
    <property type="entry name" value="ASPARTATE CARBAMOYLTRANSFERASE"/>
    <property type="match status" value="1"/>
</dbReference>
<dbReference type="PANTHER" id="PTHR45753">
    <property type="entry name" value="ORNITHINE CARBAMOYLTRANSFERASE, MITOCHONDRIAL"/>
    <property type="match status" value="1"/>
</dbReference>
<dbReference type="Pfam" id="PF00185">
    <property type="entry name" value="OTCace"/>
    <property type="match status" value="1"/>
</dbReference>
<dbReference type="Pfam" id="PF02729">
    <property type="entry name" value="OTCace_N"/>
    <property type="match status" value="1"/>
</dbReference>
<dbReference type="PRINTS" id="PR00100">
    <property type="entry name" value="AOTCASE"/>
</dbReference>
<dbReference type="PRINTS" id="PR00101">
    <property type="entry name" value="ATCASE"/>
</dbReference>
<dbReference type="SUPFAM" id="SSF53671">
    <property type="entry name" value="Aspartate/ornithine carbamoyltransferase"/>
    <property type="match status" value="1"/>
</dbReference>
<dbReference type="PROSITE" id="PS00097">
    <property type="entry name" value="CARBAMOYLTRANSFERASE"/>
    <property type="match status" value="1"/>
</dbReference>
<protein>
    <recommendedName>
        <fullName evidence="1">Aspartate carbamoyltransferase catalytic subunit</fullName>
        <ecNumber evidence="1">2.1.3.2</ecNumber>
    </recommendedName>
    <alternativeName>
        <fullName evidence="1">Aspartate transcarbamylase</fullName>
        <shortName evidence="1">ATCase</shortName>
    </alternativeName>
</protein>
<feature type="chain" id="PRO_1000116128" description="Aspartate carbamoyltransferase catalytic subunit">
    <location>
        <begin position="1"/>
        <end position="310"/>
    </location>
</feature>
<feature type="binding site" evidence="1">
    <location>
        <position position="55"/>
    </location>
    <ligand>
        <name>carbamoyl phosphate</name>
        <dbReference type="ChEBI" id="CHEBI:58228"/>
    </ligand>
</feature>
<feature type="binding site" evidence="1">
    <location>
        <position position="56"/>
    </location>
    <ligand>
        <name>carbamoyl phosphate</name>
        <dbReference type="ChEBI" id="CHEBI:58228"/>
    </ligand>
</feature>
<feature type="binding site" evidence="1">
    <location>
        <position position="85"/>
    </location>
    <ligand>
        <name>L-aspartate</name>
        <dbReference type="ChEBI" id="CHEBI:29991"/>
    </ligand>
</feature>
<feature type="binding site" evidence="1">
    <location>
        <position position="106"/>
    </location>
    <ligand>
        <name>carbamoyl phosphate</name>
        <dbReference type="ChEBI" id="CHEBI:58228"/>
    </ligand>
</feature>
<feature type="binding site" evidence="1">
    <location>
        <position position="135"/>
    </location>
    <ligand>
        <name>carbamoyl phosphate</name>
        <dbReference type="ChEBI" id="CHEBI:58228"/>
    </ligand>
</feature>
<feature type="binding site" evidence="1">
    <location>
        <position position="138"/>
    </location>
    <ligand>
        <name>carbamoyl phosphate</name>
        <dbReference type="ChEBI" id="CHEBI:58228"/>
    </ligand>
</feature>
<feature type="binding site" evidence="1">
    <location>
        <position position="168"/>
    </location>
    <ligand>
        <name>L-aspartate</name>
        <dbReference type="ChEBI" id="CHEBI:29991"/>
    </ligand>
</feature>
<feature type="binding site" evidence="1">
    <location>
        <position position="230"/>
    </location>
    <ligand>
        <name>L-aspartate</name>
        <dbReference type="ChEBI" id="CHEBI:29991"/>
    </ligand>
</feature>
<feature type="binding site" evidence="1">
    <location>
        <position position="268"/>
    </location>
    <ligand>
        <name>carbamoyl phosphate</name>
        <dbReference type="ChEBI" id="CHEBI:58228"/>
    </ligand>
</feature>
<feature type="binding site" evidence="1">
    <location>
        <position position="269"/>
    </location>
    <ligand>
        <name>carbamoyl phosphate</name>
        <dbReference type="ChEBI" id="CHEBI:58228"/>
    </ligand>
</feature>
<name>PYRB_BUCA5</name>
<accession>B8D9F4</accession>
<comment type="function">
    <text evidence="1">Catalyzes the condensation of carbamoyl phosphate and aspartate to form carbamoyl aspartate and inorganic phosphate, the committed step in the de novo pyrimidine nucleotide biosynthesis pathway.</text>
</comment>
<comment type="catalytic activity">
    <reaction evidence="1">
        <text>carbamoyl phosphate + L-aspartate = N-carbamoyl-L-aspartate + phosphate + H(+)</text>
        <dbReference type="Rhea" id="RHEA:20013"/>
        <dbReference type="ChEBI" id="CHEBI:15378"/>
        <dbReference type="ChEBI" id="CHEBI:29991"/>
        <dbReference type="ChEBI" id="CHEBI:32814"/>
        <dbReference type="ChEBI" id="CHEBI:43474"/>
        <dbReference type="ChEBI" id="CHEBI:58228"/>
        <dbReference type="EC" id="2.1.3.2"/>
    </reaction>
</comment>
<comment type="pathway">
    <text evidence="1">Pyrimidine metabolism; UMP biosynthesis via de novo pathway; (S)-dihydroorotate from bicarbonate: step 2/3.</text>
</comment>
<comment type="subunit">
    <text evidence="1">Heterododecamer (2C3:3R2) of six catalytic PyrB chains organized as two trimers (C3), and six regulatory PyrI chains organized as three dimers (R2).</text>
</comment>
<comment type="similarity">
    <text evidence="1">Belongs to the aspartate/ornithine carbamoyltransferase superfamily. ATCase family.</text>
</comment>
<organism>
    <name type="scientific">Buchnera aphidicola subsp. Acyrthosiphon pisum (strain 5A)</name>
    <dbReference type="NCBI Taxonomy" id="563178"/>
    <lineage>
        <taxon>Bacteria</taxon>
        <taxon>Pseudomonadati</taxon>
        <taxon>Pseudomonadota</taxon>
        <taxon>Gammaproteobacteria</taxon>
        <taxon>Enterobacterales</taxon>
        <taxon>Erwiniaceae</taxon>
        <taxon>Buchnera</taxon>
    </lineage>
</organism>
<sequence>MRNSLYKKNIISINDLQRNELELVLNKSAMLKRTPQPNLLKNKVIASCFFEASTRTRLSFETAIYRLGASIVGFSDGNNISLEKKGETLTDTISVISSYVDAIIIRHPQEGSARLAAEFSNKKPIFNAGDGANQHPTQTLLDLFTIQETQNRLTQLNIAIVGDLKYGRTVHSLTQALAKFKHNKFYFISPDALKMPNYINNMLDKKEIYWKRHNNIEEIISEIDILYMTRIQKERLDSTEYANAKSKFVLRAAILKNARNNMKILHPLPRIDEIDRDVDYTPYAWYFKQAANGIYARQAILSLVLIEKHL</sequence>
<gene>
    <name evidence="1" type="primary">pyrB</name>
    <name type="ordered locus">BUAP5A_362</name>
</gene>